<proteinExistence type="evidence at protein level"/>
<protein>
    <recommendedName>
        <fullName evidence="13">BAG family molecular chaperone regulator 6</fullName>
    </recommendedName>
    <alternativeName>
        <fullName evidence="13">Bcl-2-associated athanogene 6</fullName>
    </alternativeName>
    <alternativeName>
        <fullName evidence="11">CaM-binding protein 1</fullName>
    </alternativeName>
    <component>
        <recommendedName>
            <fullName evidence="12">Cleaved BAG6</fullName>
        </recommendedName>
    </component>
</protein>
<feature type="chain" id="PRO_0000415526" description="BAG family molecular chaperone regulator 6">
    <location>
        <begin position="1"/>
        <end position="1043"/>
    </location>
</feature>
<feature type="chain" id="PRO_0000436006" description="Cleaved BAG6">
    <location>
        <begin position="1"/>
        <end position="760"/>
    </location>
</feature>
<feature type="domain" description="IQ" evidence="3">
    <location>
        <begin position="568"/>
        <end position="597"/>
    </location>
</feature>
<feature type="domain" description="BAG" evidence="4">
    <location>
        <begin position="595"/>
        <end position="672"/>
    </location>
</feature>
<feature type="region of interest" description="Disordered" evidence="5">
    <location>
        <begin position="253"/>
        <end position="294"/>
    </location>
</feature>
<feature type="region of interest" description="Disordered" evidence="5">
    <location>
        <begin position="311"/>
        <end position="331"/>
    </location>
</feature>
<feature type="region of interest" description="Disordered" evidence="5">
    <location>
        <begin position="343"/>
        <end position="366"/>
    </location>
</feature>
<feature type="region of interest" description="Disordered" evidence="5">
    <location>
        <begin position="410"/>
        <end position="500"/>
    </location>
</feature>
<feature type="region of interest" description="Disordered" evidence="5">
    <location>
        <begin position="533"/>
        <end position="566"/>
    </location>
</feature>
<feature type="region of interest" description="Disordered" evidence="5">
    <location>
        <begin position="724"/>
        <end position="749"/>
    </location>
</feature>
<feature type="region of interest" description="Disordered" evidence="5">
    <location>
        <begin position="764"/>
        <end position="799"/>
    </location>
</feature>
<feature type="region of interest" description="Disordered" evidence="5">
    <location>
        <begin position="817"/>
        <end position="975"/>
    </location>
</feature>
<feature type="region of interest" description="Disordered" evidence="5">
    <location>
        <begin position="1015"/>
        <end position="1043"/>
    </location>
</feature>
<feature type="coiled-coil region" evidence="2">
    <location>
        <begin position="971"/>
        <end position="1024"/>
    </location>
</feature>
<feature type="compositionally biased region" description="Basic and acidic residues" evidence="5">
    <location>
        <begin position="311"/>
        <end position="324"/>
    </location>
</feature>
<feature type="compositionally biased region" description="Basic and acidic residues" evidence="5">
    <location>
        <begin position="343"/>
        <end position="357"/>
    </location>
</feature>
<feature type="compositionally biased region" description="Basic and acidic residues" evidence="5">
    <location>
        <begin position="416"/>
        <end position="443"/>
    </location>
</feature>
<feature type="compositionally biased region" description="Basic and acidic residues" evidence="5">
    <location>
        <begin position="478"/>
        <end position="487"/>
    </location>
</feature>
<feature type="compositionally biased region" description="Polar residues" evidence="5">
    <location>
        <begin position="534"/>
        <end position="543"/>
    </location>
</feature>
<feature type="compositionally biased region" description="Basic and acidic residues" evidence="5">
    <location>
        <begin position="550"/>
        <end position="566"/>
    </location>
</feature>
<feature type="compositionally biased region" description="Basic and acidic residues" evidence="5">
    <location>
        <begin position="724"/>
        <end position="741"/>
    </location>
</feature>
<feature type="compositionally biased region" description="Low complexity" evidence="5">
    <location>
        <begin position="840"/>
        <end position="852"/>
    </location>
</feature>
<feature type="compositionally biased region" description="Basic and acidic residues" evidence="5">
    <location>
        <begin position="853"/>
        <end position="871"/>
    </location>
</feature>
<feature type="compositionally biased region" description="Polar residues" evidence="5">
    <location>
        <begin position="885"/>
        <end position="899"/>
    </location>
</feature>
<feature type="compositionally biased region" description="Polar residues" evidence="5">
    <location>
        <begin position="919"/>
        <end position="932"/>
    </location>
</feature>
<feature type="compositionally biased region" description="Basic and acidic residues" evidence="5">
    <location>
        <begin position="934"/>
        <end position="951"/>
    </location>
</feature>
<feature type="compositionally biased region" description="Basic residues" evidence="5">
    <location>
        <begin position="1018"/>
        <end position="1031"/>
    </location>
</feature>
<feature type="compositionally biased region" description="Polar residues" evidence="5">
    <location>
        <begin position="1034"/>
        <end position="1043"/>
    </location>
</feature>
<feature type="mutagenesis site" description="Abolishes interaction with CaM." evidence="6">
    <original>I</original>
    <variation>N</variation>
    <variation>S</variation>
    <location>
        <position position="575"/>
    </location>
</feature>
<feature type="mutagenesis site" description="Abolishes processing by caspase-1." evidence="10">
    <original>D</original>
    <variation>A</variation>
    <location>
        <position position="760"/>
    </location>
</feature>
<organism>
    <name type="scientific">Arabidopsis thaliana</name>
    <name type="common">Mouse-ear cress</name>
    <dbReference type="NCBI Taxonomy" id="3702"/>
    <lineage>
        <taxon>Eukaryota</taxon>
        <taxon>Viridiplantae</taxon>
        <taxon>Streptophyta</taxon>
        <taxon>Embryophyta</taxon>
        <taxon>Tracheophyta</taxon>
        <taxon>Spermatophyta</taxon>
        <taxon>Magnoliopsida</taxon>
        <taxon>eudicotyledons</taxon>
        <taxon>Gunneridae</taxon>
        <taxon>Pentapetalae</taxon>
        <taxon>rosids</taxon>
        <taxon>malvids</taxon>
        <taxon>Brassicales</taxon>
        <taxon>Brassicaceae</taxon>
        <taxon>Camelineae</taxon>
        <taxon>Arabidopsis</taxon>
    </lineage>
</organism>
<accession>O82345</accession>
<gene>
    <name evidence="13" type="primary">BAG6</name>
    <name evidence="11" type="synonym">CAMBP1</name>
    <name evidence="14" type="ordered locus">At2g46240</name>
    <name evidence="15" type="ORF">T3F17.11</name>
</gene>
<keyword id="KW-0053">Apoptosis</keyword>
<keyword id="KW-0112">Calmodulin-binding</keyword>
<keyword id="KW-0143">Chaperone</keyword>
<keyword id="KW-0175">Coiled coil</keyword>
<keyword id="KW-1185">Reference proteome</keyword>
<keyword id="KW-0346">Stress response</keyword>
<sequence length="1043" mass="116758">MMPVYMDPSQPCQMRPQEYYYQGFGNNSQHMAMDAPPPCHGSCVHGNFPAYWPPCYPPQVPYHQCCMNRSAFHPPHASYAPSCYVHPPFPVGYQPWFDVEKDVPGKHHCGKCSSQMCDLKKDRGVVIEEHEPEIEKGEAVLPVRSTNCPYPIIWIPHENARNQEYRSSLGLGKHNQPPAEVRAPDNMTIQKSFPESWRGCFPFDESSMKSLVQNQDSKKAQNGKTVEAPFDISKFKSLLQGQDMKEAQIQKNKEELGQLTYPTSWVPSRRKRDDVEASESSNEDRKKMQNGKTVEYPFDISMIKSLIQGQDVKEAQNQKNKEEPGQVPYPIFWIPSYGKRKDVEASESKESSNEGRNLESCPSDLHRNEGQITQAKGKEGNFECNVLSDAEEKSSVINIPVANHLQEPRNIPVKLSENHLPKPTEPTKRIAKNEPVKSTKKEQSSSSSEASKLPPVCLRVDPLPKERNGGSKSVSHPKRMEKSKETKIAAPLSSKKAESRTVPEACNVKCEDANAEMKMAEGSLNALRTEKGSVESNSNLQEESNGEIIKPCEAKENREQPAKKSFTEEEAARIIQSMYRGYDVRRWEPIKKLKEIATVREQMGDVKKRIEALEASTDQHIEEKEIVVNGELVMNLLLKLDAVEGLHPSIREFRKALATELSSIQDKLDSLKNSCASAEKEAVKEQVEIKSQPSDSPVNLEHSQLTEENKMVSDTNLEKVLRLSPEEHPMSVLNRTDEKQAESAAETEEGYGLFETLATDSKQATENAAAASSTTIPEKIGEVETVVPGNPPSADGNGMTVTNVEENKAMVVESLEEPINELPQMVEETETNSIRDPENASEVSEAETNSSENENRKGEDDIVLHSEKNVELSELPVGVIDEETQPLSQDPSSSYTREGNMTAMDPKTASQEETEVDHSPNNSKGIGQQTSEPQDEKEQSPETEVIVKEQPLETEVILNEQAPEPEITEPGISKETKKLMEENQRFKETMETLVKAGREQLEVISKLTSRVKSLEKKLSHKKKTQIRRRASKPMSVSPTDAVL</sequence>
<evidence type="ECO:0000250" key="1"/>
<evidence type="ECO:0000255" key="2"/>
<evidence type="ECO:0000255" key="3">
    <source>
        <dbReference type="PROSITE-ProRule" id="PRU00116"/>
    </source>
</evidence>
<evidence type="ECO:0000255" key="4">
    <source>
        <dbReference type="PROSITE-ProRule" id="PRU00369"/>
    </source>
</evidence>
<evidence type="ECO:0000256" key="5">
    <source>
        <dbReference type="SAM" id="MobiDB-lite"/>
    </source>
</evidence>
<evidence type="ECO:0000269" key="6">
    <source>
    </source>
</evidence>
<evidence type="ECO:0000269" key="7">
    <source>
    </source>
</evidence>
<evidence type="ECO:0000269" key="8">
    <source>
    </source>
</evidence>
<evidence type="ECO:0000269" key="9">
    <source>
    </source>
</evidence>
<evidence type="ECO:0000269" key="10">
    <source>
    </source>
</evidence>
<evidence type="ECO:0000303" key="11">
    <source>
    </source>
</evidence>
<evidence type="ECO:0000303" key="12">
    <source>
    </source>
</evidence>
<evidence type="ECO:0000303" key="13">
    <source ref="3"/>
</evidence>
<evidence type="ECO:0000312" key="14">
    <source>
        <dbReference type="Araport" id="AT2G46240"/>
    </source>
</evidence>
<evidence type="ECO:0000312" key="15">
    <source>
        <dbReference type="EMBL" id="AAC62882.1"/>
    </source>
</evidence>
<reference key="1">
    <citation type="journal article" date="1999" name="Nature">
        <title>Sequence and analysis of chromosome 2 of the plant Arabidopsis thaliana.</title>
        <authorList>
            <person name="Lin X."/>
            <person name="Kaul S."/>
            <person name="Rounsley S.D."/>
            <person name="Shea T.P."/>
            <person name="Benito M.-I."/>
            <person name="Town C.D."/>
            <person name="Fujii C.Y."/>
            <person name="Mason T.M."/>
            <person name="Bowman C.L."/>
            <person name="Barnstead M.E."/>
            <person name="Feldblyum T.V."/>
            <person name="Buell C.R."/>
            <person name="Ketchum K.A."/>
            <person name="Lee J.J."/>
            <person name="Ronning C.M."/>
            <person name="Koo H.L."/>
            <person name="Moffat K.S."/>
            <person name="Cronin L.A."/>
            <person name="Shen M."/>
            <person name="Pai G."/>
            <person name="Van Aken S."/>
            <person name="Umayam L."/>
            <person name="Tallon L.J."/>
            <person name="Gill J.E."/>
            <person name="Adams M.D."/>
            <person name="Carrera A.J."/>
            <person name="Creasy T.H."/>
            <person name="Goodman H.M."/>
            <person name="Somerville C.R."/>
            <person name="Copenhaver G.P."/>
            <person name="Preuss D."/>
            <person name="Nierman W.C."/>
            <person name="White O."/>
            <person name="Eisen J.A."/>
            <person name="Salzberg S.L."/>
            <person name="Fraser C.M."/>
            <person name="Venter J.C."/>
        </authorList>
    </citation>
    <scope>NUCLEOTIDE SEQUENCE [LARGE SCALE GENOMIC DNA]</scope>
    <source>
        <strain>cv. Columbia</strain>
    </source>
</reference>
<reference key="2">
    <citation type="journal article" date="2017" name="Plant J.">
        <title>Araport11: a complete reannotation of the Arabidopsis thaliana reference genome.</title>
        <authorList>
            <person name="Cheng C.Y."/>
            <person name="Krishnakumar V."/>
            <person name="Chan A.P."/>
            <person name="Thibaud-Nissen F."/>
            <person name="Schobel S."/>
            <person name="Town C.D."/>
        </authorList>
    </citation>
    <scope>GENOME REANNOTATION</scope>
    <source>
        <strain>cv. Columbia</strain>
    </source>
</reference>
<reference key="3">
    <citation type="journal article" date="2003" name="Plant Sci.">
        <title>The BAG-family proteins in Arabidopsis thaliana.</title>
        <authorList>
            <person name="Juqiang Y."/>
            <person name="Cixin H."/>
            <person name="Hong Z."/>
        </authorList>
    </citation>
    <scope>GENE FAMILY</scope>
    <scope>NOMENCLATURE</scope>
</reference>
<reference key="4">
    <citation type="journal article" date="2006" name="Cell Death Differ.">
        <title>AtBAG6, a novel calmodulin-binding protein, induces programmed cell death in yeast and plants.</title>
        <authorList>
            <person name="Kang C.H."/>
            <person name="Jung W.Y."/>
            <person name="Kang Y.H."/>
            <person name="Kim J.Y."/>
            <person name="Kim D.G."/>
            <person name="Jeong J.C."/>
            <person name="Baek D.W."/>
            <person name="Jin J.B."/>
            <person name="Lee J.Y."/>
            <person name="Kim M.O."/>
            <person name="Chung W.S."/>
            <person name="Mengiste T."/>
            <person name="Koiwa H."/>
            <person name="Kwak S.S."/>
            <person name="Bahk J.D."/>
            <person name="Lee S.Y."/>
            <person name="Nam J.S."/>
            <person name="Yun D.J."/>
            <person name="Cho M.J."/>
        </authorList>
    </citation>
    <scope>FUNCTION</scope>
    <scope>INTERACTION WITH CAM1; CAM2; CAM3; CAM4; CAM6 AND CAM7</scope>
    <scope>INDUCTION</scope>
    <scope>MUTAGENESIS OF ILE-575</scope>
</reference>
<reference key="5">
    <citation type="journal article" date="2006" name="J. Biol. Chem.">
        <title>Identification and functional characterization of the BAG protein family in Arabidopsis thaliana.</title>
        <authorList>
            <person name="Doukhanina E.V."/>
            <person name="Chen S."/>
            <person name="van der Zalm E."/>
            <person name="Godzik A."/>
            <person name="Reed J."/>
            <person name="Dickman M.B."/>
        </authorList>
    </citation>
    <scope>GENE FAMILY</scope>
    <scope>FUNCTION</scope>
    <scope>INDUCTION</scope>
    <scope>TISSUE SPECIFICITY</scope>
    <scope>DISRUPTION PHENOTYPE</scope>
</reference>
<reference key="6">
    <citation type="journal article" date="2009" name="Biosci. Biotechnol. Biochem.">
        <title>Analysis of the regulation of target genes by an Arabidopsis heat shock transcription factor, HsfA2.</title>
        <authorList>
            <person name="Nishizawa-Yokoi A."/>
            <person name="Yoshida E."/>
            <person name="Yabuta Y."/>
            <person name="Shigeoka S."/>
        </authorList>
    </citation>
    <scope>INDUCTION</scope>
</reference>
<reference key="7">
    <citation type="journal article" date="2016" name="Plant Cell Environ.">
        <title>Dissecting the proteome dynamics of the early heat stress response leading to plant survival or death in Arabidopsis.</title>
        <authorList>
            <person name="Echevarria-Zomeno S."/>
            <person name="Fernandez-Calvino L."/>
            <person name="Castro-Sanz A.B."/>
            <person name="Lopez J.A."/>
            <person name="Vazquez J."/>
            <person name="Castellano M.M."/>
        </authorList>
    </citation>
    <scope>INDUCTION BY HEAT</scope>
    <scope>FUNCTION</scope>
</reference>
<reference key="8">
    <citation type="journal article" date="2016" name="Plant Cell">
        <title>Aspartyl protease-mediated cleavage of BAG6 is necessary for autophagy and fungal resistance in plants.</title>
        <authorList>
            <person name="Li Y."/>
            <person name="Kabbage M."/>
            <person name="Liu W."/>
            <person name="Dickman M.B."/>
        </authorList>
    </citation>
    <scope>FUNCTION</scope>
    <scope>DISRUPTION PHENOTYPE</scope>
    <scope>PROTEOLYTIC PROCESSING</scope>
    <scope>MUTAGENESIS OF ASP-760</scope>
    <scope>INTERACTION WITH APCB1 AND BAGP1</scope>
</reference>
<dbReference type="EMBL" id="AC005397">
    <property type="protein sequence ID" value="AAC62882.1"/>
    <property type="molecule type" value="Genomic_DNA"/>
</dbReference>
<dbReference type="EMBL" id="CP002685">
    <property type="protein sequence ID" value="AEC10664.1"/>
    <property type="molecule type" value="Genomic_DNA"/>
</dbReference>
<dbReference type="PIR" id="D84900">
    <property type="entry name" value="D84900"/>
</dbReference>
<dbReference type="RefSeq" id="NP_182147.1">
    <property type="nucleotide sequence ID" value="NM_130187.4"/>
</dbReference>
<dbReference type="SMR" id="O82345"/>
<dbReference type="BioGRID" id="4567">
    <property type="interactions" value="1"/>
</dbReference>
<dbReference type="FunCoup" id="O82345">
    <property type="interactions" value="81"/>
</dbReference>
<dbReference type="IntAct" id="O82345">
    <property type="interactions" value="4"/>
</dbReference>
<dbReference type="STRING" id="3702.O82345"/>
<dbReference type="GlyGen" id="O82345">
    <property type="glycosylation" value="1 site"/>
</dbReference>
<dbReference type="PaxDb" id="3702-AT2G46240.1"/>
<dbReference type="ProteomicsDB" id="240738"/>
<dbReference type="EnsemblPlants" id="AT2G46240.1">
    <property type="protein sequence ID" value="AT2G46240.1"/>
    <property type="gene ID" value="AT2G46240"/>
</dbReference>
<dbReference type="GeneID" id="819232"/>
<dbReference type="Gramene" id="AT2G46240.1">
    <property type="protein sequence ID" value="AT2G46240.1"/>
    <property type="gene ID" value="AT2G46240"/>
</dbReference>
<dbReference type="KEGG" id="ath:AT2G46240"/>
<dbReference type="Araport" id="AT2G46240"/>
<dbReference type="TAIR" id="AT2G46240">
    <property type="gene designation" value="BAG6"/>
</dbReference>
<dbReference type="eggNOG" id="ENOG502QRHM">
    <property type="taxonomic scope" value="Eukaryota"/>
</dbReference>
<dbReference type="HOGENOM" id="CLU_292287_0_0_1"/>
<dbReference type="InParanoid" id="O82345"/>
<dbReference type="OMA" id="ESHHNER"/>
<dbReference type="PhylomeDB" id="O82345"/>
<dbReference type="PRO" id="PR:O82345"/>
<dbReference type="Proteomes" id="UP000006548">
    <property type="component" value="Chromosome 2"/>
</dbReference>
<dbReference type="ExpressionAtlas" id="O82345">
    <property type="expression patterns" value="baseline and differential"/>
</dbReference>
<dbReference type="GO" id="GO:0009506">
    <property type="term" value="C:plasmodesma"/>
    <property type="evidence" value="ECO:0007005"/>
    <property type="project" value="TAIR"/>
</dbReference>
<dbReference type="GO" id="GO:0005516">
    <property type="term" value="F:calmodulin binding"/>
    <property type="evidence" value="ECO:0000353"/>
    <property type="project" value="TAIR"/>
</dbReference>
<dbReference type="GO" id="GO:0051087">
    <property type="term" value="F:protein-folding chaperone binding"/>
    <property type="evidence" value="ECO:0007669"/>
    <property type="project" value="InterPro"/>
</dbReference>
<dbReference type="GO" id="GO:0006914">
    <property type="term" value="P:autophagy"/>
    <property type="evidence" value="ECO:0000315"/>
    <property type="project" value="TAIR"/>
</dbReference>
<dbReference type="GO" id="GO:0050832">
    <property type="term" value="P:defense response to fungus"/>
    <property type="evidence" value="ECO:0000315"/>
    <property type="project" value="TAIR"/>
</dbReference>
<dbReference type="GO" id="GO:0012502">
    <property type="term" value="P:induction of programmed cell death"/>
    <property type="evidence" value="ECO:0000315"/>
    <property type="project" value="TAIR"/>
</dbReference>
<dbReference type="GO" id="GO:0010508">
    <property type="term" value="P:positive regulation of autophagy"/>
    <property type="evidence" value="ECO:0000315"/>
    <property type="project" value="TAIR"/>
</dbReference>
<dbReference type="GO" id="GO:0009408">
    <property type="term" value="P:response to heat"/>
    <property type="evidence" value="ECO:0000270"/>
    <property type="project" value="TAIR"/>
</dbReference>
<dbReference type="GO" id="GO:0010228">
    <property type="term" value="P:vegetative to reproductive phase transition of meristem"/>
    <property type="evidence" value="ECO:0000315"/>
    <property type="project" value="TAIR"/>
</dbReference>
<dbReference type="FunFam" id="1.20.58.120:FF:000010">
    <property type="entry name" value="BAG family molecular chaperone regulator 6"/>
    <property type="match status" value="1"/>
</dbReference>
<dbReference type="Gene3D" id="1.20.58.120">
    <property type="entry name" value="BAG domain"/>
    <property type="match status" value="1"/>
</dbReference>
<dbReference type="InterPro" id="IPR040400">
    <property type="entry name" value="BAG5/6/7/8"/>
</dbReference>
<dbReference type="InterPro" id="IPR036533">
    <property type="entry name" value="BAG_dom_sf"/>
</dbReference>
<dbReference type="InterPro" id="IPR003103">
    <property type="entry name" value="BAG_domain"/>
</dbReference>
<dbReference type="PANTHER" id="PTHR33322">
    <property type="entry name" value="BAG DOMAIN CONTAINING PROTEIN, EXPRESSED"/>
    <property type="match status" value="1"/>
</dbReference>
<dbReference type="PANTHER" id="PTHR33322:SF16">
    <property type="entry name" value="BAG FAMILY MOLECULAR CHAPERONE REGULATOR 6"/>
    <property type="match status" value="1"/>
</dbReference>
<dbReference type="Pfam" id="PF02179">
    <property type="entry name" value="BAG"/>
    <property type="match status" value="1"/>
</dbReference>
<dbReference type="SMART" id="SM00264">
    <property type="entry name" value="BAG"/>
    <property type="match status" value="1"/>
</dbReference>
<dbReference type="SUPFAM" id="SSF63491">
    <property type="entry name" value="BAG domain"/>
    <property type="match status" value="1"/>
</dbReference>
<dbReference type="PROSITE" id="PS51035">
    <property type="entry name" value="BAG"/>
    <property type="match status" value="1"/>
</dbReference>
<dbReference type="PROSITE" id="PS50096">
    <property type="entry name" value="IQ"/>
    <property type="match status" value="1"/>
</dbReference>
<comment type="function">
    <text evidence="6 7 9 10">Co-chaperone that regulates diverse cellular pathways, such as programmed cell death and stress responses (PubMed:16003391). Involved in plant basal resistance (PubMed:16636050, PubMed:26739014). Involved in basal heat response through the regulation of the heat induced small HSP (sHSP) transcriptional cascade (PubMed:26580143).</text>
</comment>
<comment type="function">
    <molecule>Cleaved BAG6</molecule>
    <text evidence="10">Induces autophagy.</text>
</comment>
<comment type="subunit">
    <text evidence="1 6 10">Binds to the ATPase domain of HSP70/HSC70 chaperones (By similarity). Interacts with calmodulins CAM1, CAM2, CAM3, CAM4, CAM6 and CAM7 (PubMed:16003391). Interacts with BAGP1 and APCB1 (PubMed:26739014).</text>
</comment>
<comment type="interaction">
    <interactant intactId="EBI-1397246">
        <id>O82345</id>
    </interactant>
    <interactant intactId="EBI-1397259">
        <id>P25069</id>
        <label>CAM5</label>
    </interactant>
    <organismsDiffer>false</organismsDiffer>
    <experiments>4</experiments>
</comment>
<comment type="tissue specificity">
    <text evidence="7">Detected in stems, leaves, flowers and roots.</text>
</comment>
<comment type="induction">
    <text evidence="6 7 8 9">By heat shock, by salicylic acid (SA), by abscisic acid (ABA), by calcium, by hydrogen peroxide, and by pathogen B.cinerea attack. Up-regulated by HSFA2.</text>
</comment>
<comment type="domain">
    <text>IQ domain mediates interaction with calmodulin.</text>
</comment>
<comment type="disruption phenotype">
    <text evidence="7 10">Early flowering and shorter vegetative and reproductive phases, with more branched roots and inflorescences (PubMed:16636050). Early senescence (PubMed:16636050). Hypersensitivity to light (PubMed:16636050). Enhanced susceptibility to B.cinerea and permissive fungal growth (PubMed:16636050, PubMed:26739014).</text>
</comment>
<comment type="miscellaneous">
    <text evidence="10">Overexpression of BAG6 results in a lesion mimic phenotype. Processed by APCB1 during lesion mimic development. The cleavage is triggered by pathogen infection or by pathogen-associated molecular patterns (PAMPs).</text>
</comment>
<name>BAG6_ARATH</name>